<name>MALE_THELN</name>
<gene>
    <name type="primary">malE</name>
    <name type="ORF">OCC_03562</name>
</gene>
<keyword id="KW-0002">3D-structure</keyword>
<keyword id="KW-1003">Cell membrane</keyword>
<keyword id="KW-0325">Glycoprotein</keyword>
<keyword id="KW-0449">Lipoprotein</keyword>
<keyword id="KW-0472">Membrane</keyword>
<keyword id="KW-0732">Signal</keyword>
<keyword id="KW-0762">Sugar transport</keyword>
<keyword id="KW-0813">Transport</keyword>
<feature type="signal peptide" evidence="1">
    <location>
        <begin position="1"/>
        <end position="24"/>
    </location>
</feature>
<feature type="chain" id="PRO_0000421288" description="Trehalose/maltose-binding protein MalE">
    <location>
        <begin position="25"/>
        <end position="450"/>
    </location>
</feature>
<feature type="binding site" evidence="2 12">
    <location>
        <position position="57"/>
    </location>
    <ligand>
        <name>alpha,alpha-trehalose</name>
        <dbReference type="ChEBI" id="CHEBI:16551"/>
    </ligand>
</feature>
<feature type="binding site" evidence="2 12">
    <location>
        <position position="84"/>
    </location>
    <ligand>
        <name>alpha,alpha-trehalose</name>
        <dbReference type="ChEBI" id="CHEBI:16551"/>
    </ligand>
</feature>
<feature type="binding site" evidence="2 12">
    <location>
        <position position="89"/>
    </location>
    <ligand>
        <name>alpha,alpha-trehalose</name>
        <dbReference type="ChEBI" id="CHEBI:16551"/>
    </ligand>
</feature>
<feature type="binding site" evidence="2 12">
    <location>
        <position position="110"/>
    </location>
    <ligand>
        <name>alpha,alpha-trehalose</name>
        <dbReference type="ChEBI" id="CHEBI:16551"/>
    </ligand>
</feature>
<feature type="binding site" evidence="2 12">
    <location>
        <position position="161"/>
    </location>
    <ligand>
        <name>alpha,alpha-trehalose</name>
        <dbReference type="ChEBI" id="CHEBI:16551"/>
    </ligand>
</feature>
<feature type="binding site" evidence="2 12">
    <location>
        <position position="163"/>
    </location>
    <ligand>
        <name>alpha,alpha-trehalose</name>
        <dbReference type="ChEBI" id="CHEBI:16551"/>
    </ligand>
</feature>
<feature type="binding site" evidence="2 12">
    <location>
        <position position="217"/>
    </location>
    <ligand>
        <name>alpha,alpha-trehalose</name>
        <dbReference type="ChEBI" id="CHEBI:16551"/>
    </ligand>
</feature>
<feature type="binding site" evidence="2 12">
    <location>
        <position position="279"/>
    </location>
    <ligand>
        <name>alpha,alpha-trehalose</name>
        <dbReference type="ChEBI" id="CHEBI:16551"/>
    </ligand>
</feature>
<feature type="binding site" evidence="2 12">
    <location>
        <position position="297"/>
    </location>
    <ligand>
        <name>alpha,alpha-trehalose</name>
        <dbReference type="ChEBI" id="CHEBI:16551"/>
    </ligand>
</feature>
<feature type="binding site" evidence="2 12">
    <location>
        <position position="299"/>
    </location>
    <ligand>
        <name>alpha,alpha-trehalose</name>
        <dbReference type="ChEBI" id="CHEBI:16551"/>
    </ligand>
</feature>
<feature type="binding site" evidence="2 12">
    <location>
        <position position="334"/>
    </location>
    <ligand>
        <name>alpha,alpha-trehalose</name>
        <dbReference type="ChEBI" id="CHEBI:16551"/>
    </ligand>
</feature>
<feature type="binding site" evidence="2 12">
    <location>
        <position position="335"/>
    </location>
    <ligand>
        <name>alpha,alpha-trehalose</name>
        <dbReference type="ChEBI" id="CHEBI:16551"/>
    </ligand>
</feature>
<feature type="binding site" evidence="2 12">
    <location>
        <position position="371"/>
    </location>
    <ligand>
        <name>alpha,alpha-trehalose</name>
        <dbReference type="ChEBI" id="CHEBI:16551"/>
    </ligand>
</feature>
<feature type="binding site" evidence="2 12">
    <location>
        <position position="404"/>
    </location>
    <ligand>
        <name>alpha,alpha-trehalose</name>
        <dbReference type="ChEBI" id="CHEBI:16551"/>
    </ligand>
</feature>
<feature type="sequence conflict" description="In Ref. 1; AAC38136 and 2; AAG45388." evidence="8" ref="1 2">
    <original>S</original>
    <variation>G</variation>
    <location>
        <position position="219"/>
    </location>
</feature>
<feature type="strand" evidence="13">
    <location>
        <begin position="44"/>
        <end position="51"/>
    </location>
</feature>
<feature type="helix" evidence="13">
    <location>
        <begin position="55"/>
        <end position="71"/>
    </location>
</feature>
<feature type="strand" evidence="13">
    <location>
        <begin position="76"/>
        <end position="81"/>
    </location>
</feature>
<feature type="helix" evidence="13">
    <location>
        <begin position="86"/>
        <end position="97"/>
    </location>
</feature>
<feature type="turn" evidence="13">
    <location>
        <begin position="98"/>
        <end position="100"/>
    </location>
</feature>
<feature type="strand" evidence="13">
    <location>
        <begin position="102"/>
        <end position="110"/>
    </location>
</feature>
<feature type="turn" evidence="13">
    <location>
        <begin position="111"/>
        <end position="113"/>
    </location>
</feature>
<feature type="helix" evidence="13">
    <location>
        <begin position="114"/>
        <end position="119"/>
    </location>
</feature>
<feature type="helix" evidence="13">
    <location>
        <begin position="127"/>
        <end position="133"/>
    </location>
</feature>
<feature type="helix" evidence="13">
    <location>
        <begin position="137"/>
        <end position="139"/>
    </location>
</feature>
<feature type="helix" evidence="13">
    <location>
        <begin position="142"/>
        <end position="148"/>
    </location>
</feature>
<feature type="strand" evidence="13">
    <location>
        <begin position="158"/>
        <end position="164"/>
    </location>
</feature>
<feature type="strand" evidence="13">
    <location>
        <begin position="166"/>
        <end position="170"/>
    </location>
</feature>
<feature type="helix" evidence="13">
    <location>
        <begin position="171"/>
        <end position="176"/>
    </location>
</feature>
<feature type="helix" evidence="13">
    <location>
        <begin position="186"/>
        <end position="200"/>
    </location>
</feature>
<feature type="turn" evidence="13">
    <location>
        <begin position="201"/>
        <end position="203"/>
    </location>
</feature>
<feature type="strand" evidence="13">
    <location>
        <begin position="208"/>
        <end position="211"/>
    </location>
</feature>
<feature type="strand" evidence="13">
    <location>
        <begin position="215"/>
        <end position="217"/>
    </location>
</feature>
<feature type="helix" evidence="13">
    <location>
        <begin position="218"/>
        <end position="229"/>
    </location>
</feature>
<feature type="turn" evidence="13">
    <location>
        <begin position="230"/>
        <end position="232"/>
    </location>
</feature>
<feature type="strand" evidence="13">
    <location>
        <begin position="235"/>
        <end position="239"/>
    </location>
</feature>
<feature type="strand" evidence="13">
    <location>
        <begin position="242"/>
        <end position="245"/>
    </location>
</feature>
<feature type="helix" evidence="13">
    <location>
        <begin position="250"/>
        <end position="264"/>
    </location>
</feature>
<feature type="helix" evidence="13">
    <location>
        <begin position="271"/>
        <end position="273"/>
    </location>
</feature>
<feature type="turn" evidence="13">
    <location>
        <begin position="274"/>
        <end position="276"/>
    </location>
</feature>
<feature type="helix" evidence="13">
    <location>
        <begin position="279"/>
        <end position="287"/>
    </location>
</feature>
<feature type="strand" evidence="13">
    <location>
        <begin position="291"/>
        <end position="296"/>
    </location>
</feature>
<feature type="helix" evidence="13">
    <location>
        <begin position="299"/>
        <end position="304"/>
    </location>
</feature>
<feature type="turn" evidence="13">
    <location>
        <begin position="310"/>
        <end position="313"/>
    </location>
</feature>
<feature type="strand" evidence="13">
    <location>
        <begin position="315"/>
        <end position="318"/>
    </location>
</feature>
<feature type="strand" evidence="13">
    <location>
        <begin position="331"/>
        <end position="340"/>
    </location>
</feature>
<feature type="helix" evidence="13">
    <location>
        <begin position="346"/>
        <end position="356"/>
    </location>
</feature>
<feature type="helix" evidence="13">
    <location>
        <begin position="359"/>
        <end position="368"/>
    </location>
</feature>
<feature type="strand" evidence="13">
    <location>
        <begin position="373"/>
        <end position="375"/>
    </location>
</feature>
<feature type="helix" evidence="13">
    <location>
        <begin position="378"/>
        <end position="380"/>
    </location>
</feature>
<feature type="helix" evidence="13">
    <location>
        <begin position="382"/>
        <end position="387"/>
    </location>
</feature>
<feature type="helix" evidence="13">
    <location>
        <begin position="390"/>
        <end position="393"/>
    </location>
</feature>
<feature type="helix" evidence="13">
    <location>
        <begin position="395"/>
        <end position="399"/>
    </location>
</feature>
<feature type="helix" evidence="13">
    <location>
        <begin position="410"/>
        <end position="425"/>
    </location>
</feature>
<feature type="helix" evidence="13">
    <location>
        <begin position="431"/>
        <end position="446"/>
    </location>
</feature>
<sequence>MNVKKVLLGLFLVGVLGIAVVASGCIGGQQTSTVTSTPTETSLQGKIVFAVGGAPNEIEYWKGVIAEFEKKYPGVTVELKRQATDTEQRRLDLVNALRGKSSDPDVFLMDVAWLGQFIASGWLEPLDDYVQKDNYDLSVFFQSVINLADKQGGKLYALPVYIDAGLLYYRKDLLEKYGYSKPPETWQELVEMAQKIQSGERETNPNFWGFVWQGKQYESLVCDFVEYVYSNGGSLGEFKDGKWVPTLNKPENVEALQFMVDLIHKYKISPPNTYTEMTEEPVRLMFQQGNAAFERNWPYAWGLHNADDSPVKGKVGVAPLPHFPGHKSAATLGGWHIGISKYSDNKALAWEFVKFVESYSVQKGFAMNLGWNPGRVDVYDDPAVVSKSPHLKELRAVFENAVPRPIVPYYPQLSEIIQKYVNSALAGKISPQEALDKAQKEAEELVKQYS</sequence>
<reference key="1">
    <citation type="journal article" date="1998" name="J. Bacteriol.">
        <title>Archaeal binding protein-dependent ABC transporter: molecular and biochemical analysis of the trehalose/maltose transport system of the hyperthermophilic archaeon Thermococcus litoralis.</title>
        <authorList>
            <person name="Horlacher R."/>
            <person name="Xavier K.B."/>
            <person name="Santos H."/>
            <person name="DiRuggiero J."/>
            <person name="Kossmann M."/>
            <person name="Boos W."/>
        </authorList>
    </citation>
    <scope>NUCLEOTIDE SEQUENCE [GENOMIC DNA]</scope>
    <scope>FUNCTION</scope>
    <scope>SUBCELLULAR LOCATION</scope>
    <source>
        <strain>ATCC 51850 / DSM 5473 / JCM 8560 / NS-C</strain>
    </source>
</reference>
<reference key="2">
    <citation type="journal article" date="2000" name="Mol. Microbiol.">
        <title>Evidence of recent lateral gene transfer among hyperthermophilic archaea.</title>
        <authorList>
            <person name="Diruggiero J."/>
            <person name="Dunn D."/>
            <person name="Maeder D.L."/>
            <person name="Holley-Shanks R."/>
            <person name="Chatard J."/>
            <person name="Horlacher R."/>
            <person name="Robb F.T."/>
            <person name="Boos W."/>
            <person name="Weiss R.B."/>
        </authorList>
    </citation>
    <scope>NUCLEOTIDE SEQUENCE [GENOMIC DNA]</scope>
    <source>
        <strain>ATCC 51850 / DSM 5473 / JCM 8560 / NS-C</strain>
    </source>
</reference>
<reference key="3">
    <citation type="journal article" date="2012" name="J. Bacteriol.">
        <title>Genome sequence of the model hyperthermophilic archaeon Thermococcus litoralis NS-C.</title>
        <authorList>
            <person name="Gardner A.F."/>
            <person name="Kumar S."/>
            <person name="Perler F.B."/>
        </authorList>
    </citation>
    <scope>NUCLEOTIDE SEQUENCE [LARGE SCALE GENOMIC DNA]</scope>
    <source>
        <strain>ATCC 51850 / DSM 5473 / JCM 8560 / NS-C</strain>
    </source>
</reference>
<reference key="4">
    <citation type="journal article" date="1996" name="J. Bacteriol.">
        <title>High-affinity maltose/trehalose transport system in the hyperthermophilic archaeon Thermococcus litoralis.</title>
        <authorList>
            <person name="Xavier K.B."/>
            <person name="Martins L.O."/>
            <person name="Peist R."/>
            <person name="Kossmann M."/>
            <person name="Boos W."/>
            <person name="Santos H."/>
        </authorList>
    </citation>
    <scope>FUNCTION</scope>
    <source>
        <strain>ATCC 51850 / DSM 5473 / JCM 8560 / NS-C</strain>
    </source>
</reference>
<reference key="5">
    <citation type="journal article" date="2001" name="Eur. J. Biochem.">
        <title>Purification and characterization of the heterologously expressed trehalose/maltose ABC transporter complex of the hyperthermophilic archaeon Thermococcus litoralis.</title>
        <authorList>
            <person name="Greller G."/>
            <person name="Riek R."/>
            <person name="Boos W."/>
        </authorList>
    </citation>
    <scope>FUNCTION</scope>
    <scope>SUBUNIT</scope>
    <scope>SUBCELLULAR LOCATION</scope>
    <scope>GLYCOSYLATION</scope>
</reference>
<reference key="6">
    <citation type="journal article" date="2006" name="Proteins">
        <title>D-trehalose/D-maltose-binding protein from the hyperthermophilic archaeon Thermococcus litoralis: the binding of trehalose and maltose results in different protein conformational states.</title>
        <authorList>
            <person name="Herman P."/>
            <person name="Staiano M."/>
            <person name="Marabotti A."/>
            <person name="Varriale A."/>
            <person name="Scire A."/>
            <person name="Tanfani F."/>
            <person name="Vecer J."/>
            <person name="Rossi M."/>
            <person name="D'Auria S."/>
        </authorList>
    </citation>
    <scope>FUNCTION</scope>
</reference>
<reference key="7">
    <citation type="journal article" date="2001" name="J. Mol. Biol.">
        <title>The crystal structure of a liganded trehalose/maltose-binding protein from the hyperthermophilic Archaeon Thermococcus litoralis at 1.85 A.</title>
        <authorList>
            <person name="Diez J."/>
            <person name="Diederichs K."/>
            <person name="Greller G."/>
            <person name="Horlacher R."/>
            <person name="Boos W."/>
            <person name="Welte W."/>
        </authorList>
    </citation>
    <scope>X-RAY CRYSTALLOGRAPHY (1.9 ANGSTROMS) OF 45-450 IN COMPLEX WITH TREHALOSE</scope>
    <source>
        <strain evidence="7">ATCC 51850 / DSM 5473 / JCM 8560 / NS-C</strain>
    </source>
</reference>
<dbReference type="EMBL" id="AF012836">
    <property type="protein sequence ID" value="AAC38136.1"/>
    <property type="molecule type" value="Genomic_DNA"/>
</dbReference>
<dbReference type="EMBL" id="AF307053">
    <property type="protein sequence ID" value="AAG45388.1"/>
    <property type="molecule type" value="Genomic_DNA"/>
</dbReference>
<dbReference type="EMBL" id="CP006670">
    <property type="protein sequence ID" value="EHR78234.1"/>
    <property type="molecule type" value="Genomic_DNA"/>
</dbReference>
<dbReference type="RefSeq" id="WP_004068724.1">
    <property type="nucleotide sequence ID" value="NC_022084.1"/>
</dbReference>
<dbReference type="PDB" id="1EU8">
    <property type="method" value="X-ray"/>
    <property type="resolution" value="1.90 A"/>
    <property type="chains" value="A=45-450"/>
</dbReference>
<dbReference type="PDBsum" id="1EU8"/>
<dbReference type="SMR" id="Q7LYW7"/>
<dbReference type="STRING" id="523849.OCC_03562"/>
<dbReference type="PaxDb" id="523849-OCC_03562"/>
<dbReference type="GeneID" id="16548949"/>
<dbReference type="KEGG" id="tlt:OCC_03562"/>
<dbReference type="HOGENOM" id="CLU_031285_9_1_2"/>
<dbReference type="OrthoDB" id="18034at2157"/>
<dbReference type="EvolutionaryTrace" id="Q7LYW7"/>
<dbReference type="Proteomes" id="UP000015502">
    <property type="component" value="Chromosome"/>
</dbReference>
<dbReference type="GO" id="GO:0043190">
    <property type="term" value="C:ATP-binding cassette (ABC) transporter complex"/>
    <property type="evidence" value="ECO:0000314"/>
    <property type="project" value="UniProtKB"/>
</dbReference>
<dbReference type="GO" id="GO:0055052">
    <property type="term" value="C:ATP-binding cassette (ABC) transporter complex, substrate-binding subunit-containing"/>
    <property type="evidence" value="ECO:0000305"/>
    <property type="project" value="UniProtKB"/>
</dbReference>
<dbReference type="GO" id="GO:1901982">
    <property type="term" value="F:maltose binding"/>
    <property type="evidence" value="ECO:0000314"/>
    <property type="project" value="UniProtKB"/>
</dbReference>
<dbReference type="GO" id="GO:0042956">
    <property type="term" value="P:maltodextrin transmembrane transport"/>
    <property type="evidence" value="ECO:0007669"/>
    <property type="project" value="TreeGrafter"/>
</dbReference>
<dbReference type="GO" id="GO:0015768">
    <property type="term" value="P:maltose transport"/>
    <property type="evidence" value="ECO:0000305"/>
    <property type="project" value="UniProtKB"/>
</dbReference>
<dbReference type="CDD" id="cd14750">
    <property type="entry name" value="PBP2_TMBP"/>
    <property type="match status" value="1"/>
</dbReference>
<dbReference type="Gene3D" id="3.40.190.10">
    <property type="entry name" value="Periplasmic binding protein-like II"/>
    <property type="match status" value="2"/>
</dbReference>
<dbReference type="InterPro" id="IPR006059">
    <property type="entry name" value="SBP"/>
</dbReference>
<dbReference type="PANTHER" id="PTHR30061">
    <property type="entry name" value="MALTOSE-BINDING PERIPLASMIC PROTEIN"/>
    <property type="match status" value="1"/>
</dbReference>
<dbReference type="PANTHER" id="PTHR30061:SF50">
    <property type="entry name" value="MALTOSE_MALTODEXTRIN-BINDING PERIPLASMIC PROTEIN"/>
    <property type="match status" value="1"/>
</dbReference>
<dbReference type="Pfam" id="PF01547">
    <property type="entry name" value="SBP_bac_1"/>
    <property type="match status" value="1"/>
</dbReference>
<dbReference type="SUPFAM" id="SSF53850">
    <property type="entry name" value="Periplasmic binding protein-like II"/>
    <property type="match status" value="1"/>
</dbReference>
<dbReference type="PROSITE" id="PS51257">
    <property type="entry name" value="PROKAR_LIPOPROTEIN"/>
    <property type="match status" value="1"/>
</dbReference>
<comment type="function">
    <text evidence="3 4 5 6">Part of the ABC transporter complex MalEFGK involved in trehalose/maltose import. Binds maltose and trehalose.</text>
</comment>
<comment type="subunit">
    <text evidence="3">The complex is composed of two ATP-binding proteins (MalK), two transmembrane proteins (MalG and MalF) and a solute-binding protein (MalE).</text>
</comment>
<comment type="subcellular location">
    <subcellularLocation>
        <location evidence="9 11">Cell membrane</location>
        <topology evidence="9 11">Lipid-anchor</topology>
    </subcellularLocation>
</comment>
<comment type="PTM">
    <text evidence="3">Glycosylated.</text>
</comment>
<comment type="miscellaneous">
    <text evidence="10">The protein assumes different conformations with different physical properties depending whether maltose or trehalose is bound to the protein.</text>
</comment>
<comment type="similarity">
    <text evidence="8">Belongs to the bacterial solute-binding protein 1 family.</text>
</comment>
<proteinExistence type="evidence at protein level"/>
<accession>Q7LYW7</accession>
<accession>H3ZP67</accession>
<protein>
    <recommendedName>
        <fullName>Trehalose/maltose-binding protein MalE</fullName>
        <shortName evidence="7">TMBP</shortName>
    </recommendedName>
</protein>
<organism>
    <name type="scientific">Thermococcus litoralis (strain ATCC 51850 / DSM 5473 / JCM 8560 / NS-C)</name>
    <dbReference type="NCBI Taxonomy" id="523849"/>
    <lineage>
        <taxon>Archaea</taxon>
        <taxon>Methanobacteriati</taxon>
        <taxon>Methanobacteriota</taxon>
        <taxon>Thermococci</taxon>
        <taxon>Thermococcales</taxon>
        <taxon>Thermococcaceae</taxon>
        <taxon>Thermococcus</taxon>
    </lineage>
</organism>
<evidence type="ECO:0000255" key="1">
    <source>
        <dbReference type="PROSITE-ProRule" id="PRU00303"/>
    </source>
</evidence>
<evidence type="ECO:0000269" key="2">
    <source>
    </source>
</evidence>
<evidence type="ECO:0000269" key="3">
    <source>
    </source>
</evidence>
<evidence type="ECO:0000269" key="4">
    <source>
    </source>
</evidence>
<evidence type="ECO:0000269" key="5">
    <source>
    </source>
</evidence>
<evidence type="ECO:0000269" key="6">
    <source>
    </source>
</evidence>
<evidence type="ECO:0000303" key="7">
    <source>
    </source>
</evidence>
<evidence type="ECO:0000305" key="8"/>
<evidence type="ECO:0000305" key="9">
    <source>
    </source>
</evidence>
<evidence type="ECO:0000305" key="10">
    <source>
    </source>
</evidence>
<evidence type="ECO:0000305" key="11">
    <source>
    </source>
</evidence>
<evidence type="ECO:0007744" key="12">
    <source>
        <dbReference type="PDB" id="1EU8"/>
    </source>
</evidence>
<evidence type="ECO:0007829" key="13">
    <source>
        <dbReference type="PDB" id="1EU8"/>
    </source>
</evidence>